<evidence type="ECO:0000250" key="1">
    <source>
        <dbReference type="UniProtKB" id="P20966"/>
    </source>
</evidence>
<evidence type="ECO:0000250" key="2">
    <source>
        <dbReference type="UniProtKB" id="P23355"/>
    </source>
</evidence>
<evidence type="ECO:0000255" key="3">
    <source>
        <dbReference type="PROSITE-ProRule" id="PRU00422"/>
    </source>
</evidence>
<evidence type="ECO:0000255" key="4">
    <source>
        <dbReference type="PROSITE-ProRule" id="PRU00427"/>
    </source>
</evidence>
<evidence type="ECO:0000303" key="5">
    <source>
    </source>
</evidence>
<evidence type="ECO:0000305" key="6"/>
<evidence type="ECO:0000305" key="7">
    <source>
    </source>
</evidence>
<name>PTFBC_RHOCA</name>
<proteinExistence type="inferred from homology"/>
<protein>
    <recommendedName>
        <fullName evidence="7">PTS system fructose-specific EIIB'BC component</fullName>
    </recommendedName>
    <alternativeName>
        <fullName evidence="7">EIIB'BC-Fru</fullName>
    </alternativeName>
    <domain>
        <recommendedName>
            <fullName evidence="5">PTS system fructose-specific EIIB component</fullName>
            <ecNumber evidence="1">2.7.1.202</ecNumber>
        </recommendedName>
        <alternativeName>
            <fullName evidence="1">EIII-Fru</fullName>
        </alternativeName>
        <alternativeName>
            <fullName evidence="5">Fructose-specific phosphotransferase enzyme IIB component</fullName>
        </alternativeName>
    </domain>
    <domain>
        <recommendedName>
            <fullName evidence="5">PTS system fructose-specific EIIC component</fullName>
        </recommendedName>
        <alternativeName>
            <fullName evidence="5">Fructose permease IIC component</fullName>
        </alternativeName>
    </domain>
</protein>
<sequence>MSKIVAVTAGAKGVAHTHLAAEALSATAQALGHQIRVERHSAEGVEAPLQGAEIAAADVVLIAADLRIEDVRFVTKPVYRTSTARAVTQTAAVLAEALALTGEETPQMTTDTGQRPLRVVAITSCPTGIAHTFMAADALKKTAAARGWEIAVETQGSVGSQNALSAAQIQAADLVVIAADTHVDDSRFAGKKVYKTSVGAAVKGAAKVLDAALAEGVVLGTNLADTVDALKAQRAATRSGPYMHLLTGVSYMLPLVVAGGLLIALSFVFGIKAFEVEGTLPAALMAIGGGAAFKLMVPVLAGFIAYSIADRPGLTPGLIGGMLAVNLNAGFLGGIVAGFLAGYVARWLRDAIKLPRTLEGLKPVLILPLLSTAITGLIMVYVVGTPVAAILAAMTAFLQGLGTTNAVVLGLILGGMMAVDMGGPINKAAYTFAVGLLTSSTYAPMAAVMAAGMTPPLGLALATLVAKNRFTAEEREAGGAAAVLGLSFITEGAIPFAAKDPARVIPSIIVGSAITGALSMALGCLLVAPHGGIFVLAIPHAVTNLGLYALSIVVGTLVTTGLLIALKKPIPAEERARS</sequence>
<organism>
    <name type="scientific">Rhodobacter capsulatus</name>
    <name type="common">Rhodopseudomonas capsulata</name>
    <dbReference type="NCBI Taxonomy" id="1061"/>
    <lineage>
        <taxon>Bacteria</taxon>
        <taxon>Pseudomonadati</taxon>
        <taxon>Pseudomonadota</taxon>
        <taxon>Alphaproteobacteria</taxon>
        <taxon>Rhodobacterales</taxon>
        <taxon>Rhodobacter group</taxon>
        <taxon>Rhodobacter</taxon>
    </lineage>
</organism>
<feature type="chain" id="PRO_0000186513" description="PTS system fructose-specific EIIB'BC component">
    <location>
        <begin position="1"/>
        <end position="578"/>
    </location>
</feature>
<feature type="transmembrane region" description="Helical" evidence="4">
    <location>
        <begin position="251"/>
        <end position="271"/>
    </location>
</feature>
<feature type="transmembrane region" description="Helical" evidence="4">
    <location>
        <begin position="284"/>
        <end position="304"/>
    </location>
</feature>
<feature type="transmembrane region" description="Helical" evidence="4">
    <location>
        <begin position="319"/>
        <end position="339"/>
    </location>
</feature>
<feature type="transmembrane region" description="Helical" evidence="4">
    <location>
        <begin position="364"/>
        <end position="384"/>
    </location>
</feature>
<feature type="transmembrane region" description="Helical" evidence="4">
    <location>
        <begin position="405"/>
        <end position="425"/>
    </location>
</feature>
<feature type="transmembrane region" description="Helical" evidence="4">
    <location>
        <begin position="428"/>
        <end position="450"/>
    </location>
</feature>
<feature type="transmembrane region" description="Helical" evidence="4">
    <location>
        <begin position="477"/>
        <end position="497"/>
    </location>
</feature>
<feature type="transmembrane region" description="Helical" evidence="4">
    <location>
        <begin position="518"/>
        <end position="538"/>
    </location>
</feature>
<feature type="transmembrane region" description="Helical" evidence="4">
    <location>
        <begin position="545"/>
        <end position="565"/>
    </location>
</feature>
<feature type="domain" description="PTS EIIB type-2 1" evidence="3">
    <location>
        <begin position="1"/>
        <end position="99"/>
    </location>
</feature>
<feature type="domain" description="PTS EIIB type-2 2" evidence="3">
    <location>
        <begin position="119"/>
        <end position="214"/>
    </location>
</feature>
<feature type="domain" description="PTS EIIC type-2" evidence="4">
    <location>
        <begin position="241"/>
        <end position="576"/>
    </location>
</feature>
<feature type="active site" description="Phosphocysteine intermediate; for EIIB activity" evidence="1 6">
    <location>
        <position position="125"/>
    </location>
</feature>
<feature type="modified residue" description="Phosphocysteine; by EIIA" evidence="3">
    <location>
        <position position="125"/>
    </location>
</feature>
<keyword id="KW-0997">Cell inner membrane</keyword>
<keyword id="KW-1003">Cell membrane</keyword>
<keyword id="KW-0418">Kinase</keyword>
<keyword id="KW-0472">Membrane</keyword>
<keyword id="KW-0597">Phosphoprotein</keyword>
<keyword id="KW-0598">Phosphotransferase system</keyword>
<keyword id="KW-0677">Repeat</keyword>
<keyword id="KW-0762">Sugar transport</keyword>
<keyword id="KW-0808">Transferase</keyword>
<keyword id="KW-0812">Transmembrane</keyword>
<keyword id="KW-1133">Transmembrane helix</keyword>
<keyword id="KW-0813">Transport</keyword>
<comment type="function">
    <text evidence="1 7">The phosphoenolpyruvate-dependent sugar phosphotransferase system (sugar PTS), a major carbohydrate active transport system, catalyzes the phosphorylation of incoming sugar substrates concomitantly with their translocation across the cell membrane. The enzyme II FruAB PTS system is involved in fructose transport.</text>
</comment>
<comment type="catalytic activity">
    <reaction evidence="1">
        <text>D-fructose(out) + N(pros)-phospho-L-histidyl-[protein] = D-fructose 1-phosphate(in) + L-histidyl-[protein]</text>
        <dbReference type="Rhea" id="RHEA:49252"/>
        <dbReference type="Rhea" id="RHEA-COMP:9745"/>
        <dbReference type="Rhea" id="RHEA-COMP:9746"/>
        <dbReference type="ChEBI" id="CHEBI:29979"/>
        <dbReference type="ChEBI" id="CHEBI:37721"/>
        <dbReference type="ChEBI" id="CHEBI:58674"/>
        <dbReference type="ChEBI" id="CHEBI:64837"/>
        <dbReference type="EC" id="2.7.1.202"/>
    </reaction>
</comment>
<comment type="subcellular location">
    <subcellularLocation>
        <location evidence="1 4">Cell inner membrane</location>
        <topology evidence="1 4">Multi-pass membrane protein</topology>
    </subcellularLocation>
</comment>
<comment type="induction">
    <text evidence="2">By fructose.</text>
</comment>
<comment type="domain">
    <text evidence="3">The PTS EIIB type-2 domain is phosphorylated by phospho-EIIA on a cysteinyl residue. Then, it transfers the phosphoryl group to the sugar substrate concomitantly with the sugar uptake processed by the PTS EIIC type-2 domain.</text>
</comment>
<comment type="domain">
    <text evidence="1">In the N-terminal, the PTS system fructose-specific possesses a duplicated EIIB domain (EIIB' domain) which lacks the active site and functions to facilitate phosphoryl transfer between the EIIA domain of diphosphoryl transfer protein (DTP) and the EIIB domain. The presence of the EIIB' domain is required for normal high affinity recognition of DTP by the PTS system fructose-specific as well as for normal rates of phosphoryl transfer between the EIIA and EIIB domains of DTP and PTS system fructose-specific, respectively.</text>
</comment>
<comment type="domain">
    <text evidence="4">The EIIC type-2 domain forms the PTS system translocation channel and contains the specific substrate-binding site.</text>
</comment>
<reference key="1">
    <citation type="journal article" date="1990" name="J. Bacteriol.">
        <title>Nucleotide sequence of the fruA gene, encoding the fructose permease of the Rhodobacter capsulatus phosphotransferase system, and analyses of the deduced protein sequence.</title>
        <authorList>
            <person name="Wu L.-F."/>
            <person name="Saier M.H. Jr."/>
        </authorList>
    </citation>
    <scope>NUCLEOTIDE SEQUENCE [GENOMIC DNA]</scope>
    <scope>FUNCTION</scope>
    <source>
        <strain>DSM 938 / 37b4</strain>
    </source>
</reference>
<accession>P23387</accession>
<dbReference type="EC" id="2.7.1.202" evidence="1"/>
<dbReference type="EMBL" id="X53150">
    <property type="protein sequence ID" value="CAA37303.1"/>
    <property type="molecule type" value="Genomic_DNA"/>
</dbReference>
<dbReference type="PIR" id="B37852">
    <property type="entry name" value="B37852"/>
</dbReference>
<dbReference type="RefSeq" id="WP_013068250.1">
    <property type="nucleotide sequence ID" value="NZ_VIBE01000014.1"/>
</dbReference>
<dbReference type="OMA" id="CKLMAPH"/>
<dbReference type="GO" id="GO:0005886">
    <property type="term" value="C:plasma membrane"/>
    <property type="evidence" value="ECO:0007669"/>
    <property type="project" value="UniProtKB-SubCell"/>
</dbReference>
<dbReference type="GO" id="GO:0005351">
    <property type="term" value="F:carbohydrate:proton symporter activity"/>
    <property type="evidence" value="ECO:0007669"/>
    <property type="project" value="InterPro"/>
</dbReference>
<dbReference type="GO" id="GO:0016301">
    <property type="term" value="F:kinase activity"/>
    <property type="evidence" value="ECO:0007669"/>
    <property type="project" value="UniProtKB-KW"/>
</dbReference>
<dbReference type="GO" id="GO:0022877">
    <property type="term" value="F:protein-N(PI)-phosphohistidine-fructose phosphotransferase system transporter activity"/>
    <property type="evidence" value="ECO:0007669"/>
    <property type="project" value="InterPro"/>
</dbReference>
<dbReference type="GO" id="GO:0090582">
    <property type="term" value="F:protein-phosphocysteine-D-fructose-phosphotransferase system transporter activity"/>
    <property type="evidence" value="ECO:0000250"/>
    <property type="project" value="UniProtKB"/>
</dbReference>
<dbReference type="GO" id="GO:0009401">
    <property type="term" value="P:phosphoenolpyruvate-dependent sugar phosphotransferase system"/>
    <property type="evidence" value="ECO:0000250"/>
    <property type="project" value="UniProtKB"/>
</dbReference>
<dbReference type="CDD" id="cd05569">
    <property type="entry name" value="PTS_IIB_fructose"/>
    <property type="match status" value="2"/>
</dbReference>
<dbReference type="FunFam" id="3.40.50.2300:FF:000014">
    <property type="entry name" value="PTS system fructose-like transporter subunit IIB"/>
    <property type="match status" value="1"/>
</dbReference>
<dbReference type="Gene3D" id="3.40.50.2300">
    <property type="match status" value="2"/>
</dbReference>
<dbReference type="InterPro" id="IPR050864">
    <property type="entry name" value="Bacterial_PTS_Sugar_Transport"/>
</dbReference>
<dbReference type="InterPro" id="IPR036095">
    <property type="entry name" value="PTS_EIIB-like_sf"/>
</dbReference>
<dbReference type="InterPro" id="IPR013011">
    <property type="entry name" value="PTS_EIIB_2"/>
</dbReference>
<dbReference type="InterPro" id="IPR003501">
    <property type="entry name" value="PTS_EIIB_2/3"/>
</dbReference>
<dbReference type="InterPro" id="IPR003352">
    <property type="entry name" value="PTS_EIIC"/>
</dbReference>
<dbReference type="InterPro" id="IPR013014">
    <property type="entry name" value="PTS_EIIC_2"/>
</dbReference>
<dbReference type="InterPro" id="IPR003353">
    <property type="entry name" value="PTS_IIB_fruc"/>
</dbReference>
<dbReference type="InterPro" id="IPR006327">
    <property type="entry name" value="PTS_IIC_fruc"/>
</dbReference>
<dbReference type="NCBIfam" id="TIGR00829">
    <property type="entry name" value="FRU"/>
    <property type="match status" value="1"/>
</dbReference>
<dbReference type="NCBIfam" id="NF007783">
    <property type="entry name" value="PRK10474.1"/>
    <property type="match status" value="2"/>
</dbReference>
<dbReference type="NCBIfam" id="TIGR01427">
    <property type="entry name" value="PTS_IIC_fructo"/>
    <property type="match status" value="1"/>
</dbReference>
<dbReference type="PANTHER" id="PTHR30505">
    <property type="entry name" value="FRUCTOSE-LIKE PERMEASE"/>
    <property type="match status" value="1"/>
</dbReference>
<dbReference type="PANTHER" id="PTHR30505:SF0">
    <property type="entry name" value="FRUCTOSE-LIKE PTS SYSTEM EIIBC COMPONENT-RELATED"/>
    <property type="match status" value="1"/>
</dbReference>
<dbReference type="Pfam" id="PF02378">
    <property type="entry name" value="PTS_EIIC"/>
    <property type="match status" value="1"/>
</dbReference>
<dbReference type="Pfam" id="PF02302">
    <property type="entry name" value="PTS_IIB"/>
    <property type="match status" value="2"/>
</dbReference>
<dbReference type="SUPFAM" id="SSF52794">
    <property type="entry name" value="PTS system IIB component-like"/>
    <property type="match status" value="2"/>
</dbReference>
<dbReference type="PROSITE" id="PS51099">
    <property type="entry name" value="PTS_EIIB_TYPE_2"/>
    <property type="match status" value="2"/>
</dbReference>
<dbReference type="PROSITE" id="PS51104">
    <property type="entry name" value="PTS_EIIC_TYPE_2"/>
    <property type="match status" value="1"/>
</dbReference>
<gene>
    <name evidence="5" type="primary">fruA</name>
</gene>